<dbReference type="EC" id="3.2.1.22"/>
<dbReference type="EMBL" id="L27992">
    <property type="protein sequence ID" value="AAA33022.1"/>
    <property type="molecule type" value="mRNA"/>
</dbReference>
<dbReference type="PIR" id="T50781">
    <property type="entry name" value="T50781"/>
</dbReference>
<dbReference type="SMR" id="Q42656"/>
<dbReference type="BindingDB" id="Q42656"/>
<dbReference type="ChEMBL" id="CHEMBL5217"/>
<dbReference type="DrugCentral" id="Q42656"/>
<dbReference type="CAZy" id="GH27">
    <property type="family name" value="Glycoside Hydrolase Family 27"/>
</dbReference>
<dbReference type="Proteomes" id="UP000515148">
    <property type="component" value="Unplaced"/>
</dbReference>
<dbReference type="GO" id="GO:0009505">
    <property type="term" value="C:plant-type cell wall"/>
    <property type="evidence" value="ECO:0007669"/>
    <property type="project" value="TreeGrafter"/>
</dbReference>
<dbReference type="GO" id="GO:0004557">
    <property type="term" value="F:alpha-galactosidase activity"/>
    <property type="evidence" value="ECO:0007669"/>
    <property type="project" value="UniProtKB-EC"/>
</dbReference>
<dbReference type="GO" id="GO:0005975">
    <property type="term" value="P:carbohydrate metabolic process"/>
    <property type="evidence" value="ECO:0007669"/>
    <property type="project" value="InterPro"/>
</dbReference>
<dbReference type="CDD" id="cd14792">
    <property type="entry name" value="GH27"/>
    <property type="match status" value="1"/>
</dbReference>
<dbReference type="FunFam" id="2.60.40.1180:FF:000008">
    <property type="entry name" value="Alpha-galactosidase"/>
    <property type="match status" value="1"/>
</dbReference>
<dbReference type="FunFam" id="3.20.20.70:FF:000093">
    <property type="entry name" value="Alpha-galactosidase"/>
    <property type="match status" value="1"/>
</dbReference>
<dbReference type="Gene3D" id="3.20.20.70">
    <property type="entry name" value="Aldolase class I"/>
    <property type="match status" value="1"/>
</dbReference>
<dbReference type="Gene3D" id="2.60.40.1180">
    <property type="entry name" value="Golgi alpha-mannosidase II"/>
    <property type="match status" value="1"/>
</dbReference>
<dbReference type="InterPro" id="IPR013785">
    <property type="entry name" value="Aldolase_TIM"/>
</dbReference>
<dbReference type="InterPro" id="IPR002241">
    <property type="entry name" value="Glyco_hydro_27"/>
</dbReference>
<dbReference type="InterPro" id="IPR000111">
    <property type="entry name" value="Glyco_hydro_27/36_CS"/>
</dbReference>
<dbReference type="InterPro" id="IPR013780">
    <property type="entry name" value="Glyco_hydro_b"/>
</dbReference>
<dbReference type="InterPro" id="IPR017853">
    <property type="entry name" value="Glycoside_hydrolase_SF"/>
</dbReference>
<dbReference type="InterPro" id="IPR041233">
    <property type="entry name" value="Melibiase_C"/>
</dbReference>
<dbReference type="PANTHER" id="PTHR11452:SF33">
    <property type="entry name" value="ALPHA-GALACTOSIDASE 2"/>
    <property type="match status" value="1"/>
</dbReference>
<dbReference type="PANTHER" id="PTHR11452">
    <property type="entry name" value="ALPHA-GALACTOSIDASE/ALPHA-N-ACETYLGALACTOSAMINIDASE"/>
    <property type="match status" value="1"/>
</dbReference>
<dbReference type="Pfam" id="PF16499">
    <property type="entry name" value="Melibiase_2"/>
    <property type="match status" value="1"/>
</dbReference>
<dbReference type="Pfam" id="PF17801">
    <property type="entry name" value="Melibiase_C"/>
    <property type="match status" value="1"/>
</dbReference>
<dbReference type="PRINTS" id="PR00740">
    <property type="entry name" value="GLHYDRLASE27"/>
</dbReference>
<dbReference type="SUPFAM" id="SSF51445">
    <property type="entry name" value="(Trans)glycosidases"/>
    <property type="match status" value="1"/>
</dbReference>
<dbReference type="SUPFAM" id="SSF51011">
    <property type="entry name" value="Glycosyl hydrolase domain"/>
    <property type="match status" value="1"/>
</dbReference>
<dbReference type="PROSITE" id="PS00512">
    <property type="entry name" value="ALPHA_GALACTOSIDASE"/>
    <property type="match status" value="1"/>
</dbReference>
<sequence length="378" mass="41310">MVKSPGTEDYTRRSLLANGLGLTPPMGWNSWNHFRCNLDEKLIRETADAMVSKGLAALGYKYINLDDCWAELNRDSQGNLVPKGSTFPSGIKALADYVHSKGLKLGIYSDAGTQTCSKTMPGSLGHEEQDAKTFASWGVDYLKYDNCNNNNISPKERYPIMSKALLNSGRSIFFSLCEWGEEDPATWAKEVGNSWRTTGDIDDSWSSMTSRADMNDKWASYAGPGGWNDPDMLEVGNGGMTTTEYRSHFSIWALAKAPLLIGCDIRSMDGATFQLLSNAEVIAVNQDKLGVQGNKVKTYGDLEVWAGPLSGKRVAVALWNRGSSTATITAYWSDVGLPSTAVVNARDLWAHSTEKSVKGQISAAVDAHDSKMYVLTPQ</sequence>
<keyword id="KW-0903">Direct protein sequencing</keyword>
<keyword id="KW-1015">Disulfide bond</keyword>
<keyword id="KW-0326">Glycosidase</keyword>
<keyword id="KW-0378">Hydrolase</keyword>
<keyword id="KW-1185">Reference proteome</keyword>
<keyword id="KW-0732">Signal</keyword>
<name>AGAL_COFAR</name>
<evidence type="ECO:0000250" key="1"/>
<evidence type="ECO:0000269" key="2">
    <source>
    </source>
</evidence>
<evidence type="ECO:0000269" key="3">
    <source>
    </source>
</evidence>
<evidence type="ECO:0000269" key="4">
    <source>
    </source>
</evidence>
<evidence type="ECO:0000269" key="5">
    <source>
    </source>
</evidence>
<evidence type="ECO:0000305" key="6"/>
<feature type="signal peptide" evidence="4">
    <location>
        <begin position="1"/>
        <end position="15"/>
    </location>
</feature>
<feature type="chain" id="PRO_0000001001" description="Alpha-galactosidase">
    <location>
        <begin position="16"/>
        <end position="378"/>
    </location>
</feature>
<feature type="active site" description="Nucleophile" evidence="1">
    <location>
        <position position="145"/>
    </location>
</feature>
<feature type="active site" description="Proton donor" evidence="1">
    <location>
        <position position="200"/>
    </location>
</feature>
<feature type="binding site" evidence="1">
    <location>
        <begin position="178"/>
        <end position="182"/>
    </location>
    <ligand>
        <name>substrate</name>
    </ligand>
</feature>
<feature type="disulfide bond" evidence="1">
    <location>
        <begin position="36"/>
        <end position="68"/>
    </location>
</feature>
<feature type="disulfide bond" evidence="1">
    <location>
        <begin position="116"/>
        <end position="147"/>
    </location>
</feature>
<proteinExistence type="evidence at protein level"/>
<reference key="1">
    <citation type="journal article" date="1994" name="Gene">
        <title>Cloning and functional expression of a cDNA encoding coffee bean alpha-galactosidase.</title>
        <authorList>
            <person name="Zhu A."/>
            <person name="Goldstein J."/>
        </authorList>
    </citation>
    <scope>NUCLEOTIDE SEQUENCE [MRNA]</scope>
    <scope>PROTEIN SEQUENCE OF 16-34; 215-231 AND 373-378</scope>
    <source>
        <tissue>Seed</tissue>
    </source>
</reference>
<reference key="2">
    <citation type="journal article" date="1996" name="Arch. Biochem. Biophys.">
        <title>Characterization of recombinant alpha-galactosidase for use in seroconversion from blood group B to O of human erythrocytes.</title>
        <authorList>
            <person name="Zhu A."/>
            <person name="Leng L."/>
            <person name="Monahan C."/>
            <person name="Zhang Z."/>
            <person name="Hurst R."/>
            <person name="Lenny L."/>
            <person name="Goldstein J."/>
        </authorList>
    </citation>
    <scope>BIOTECHNOLOGY</scope>
</reference>
<reference key="3">
    <citation type="journal article" date="2000" name="Transfusion">
        <title>Transfusion to blood group A and O patients of group B RBCs that have been enzymatically converted to group O.</title>
        <authorList>
            <person name="Kruskall M.S."/>
            <person name="AuBuchon J.P."/>
            <person name="Anthony K.Y."/>
            <person name="Herschel L."/>
            <person name="Pickard C."/>
            <person name="Biehl R."/>
            <person name="Horowitz M."/>
            <person name="Brambilla D.J."/>
            <person name="Popovsky M.A."/>
        </authorList>
    </citation>
    <scope>BIOTECHNOLOGY</scope>
</reference>
<reference key="4">
    <citation type="journal article" date="2007" name="Chin. Med. J.">
        <title>B to O erythrocyte conversion by the recombinant alpha-galactosidase.</title>
        <authorList>
            <person name="Zhang Y.P."/>
            <person name="Gong F."/>
            <person name="Bao G.Q."/>
            <person name="Gao H.W."/>
            <person name="Ji S.P."/>
            <person name="Tan Y.X."/>
            <person name="Li S.B."/>
            <person name="Li L.L."/>
            <person name="Wang Y.L."/>
            <person name="Xu H."/>
            <person name="Xu L.J."/>
            <person name="Tian S.G."/>
            <person name="Zhang Z.X."/>
            <person name="Lu Q.S."/>
            <person name="Qiu Y."/>
            <person name="Bai J.S."/>
            <person name="Chen J.T."/>
        </authorList>
    </citation>
    <scope>BIOTECHNOLOGY</scope>
</reference>
<accession>Q42656</accession>
<protein>
    <recommendedName>
        <fullName>Alpha-galactosidase</fullName>
        <ecNumber>3.2.1.22</ecNumber>
    </recommendedName>
    <alternativeName>
        <fullName>Alpha-D-galactoside galactohydrolase</fullName>
    </alternativeName>
    <alternativeName>
        <fullName>Melibiase</fullName>
    </alternativeName>
</protein>
<organism>
    <name type="scientific">Coffea arabica</name>
    <name type="common">Arabian coffee</name>
    <dbReference type="NCBI Taxonomy" id="13443"/>
    <lineage>
        <taxon>Eukaryota</taxon>
        <taxon>Viridiplantae</taxon>
        <taxon>Streptophyta</taxon>
        <taxon>Embryophyta</taxon>
        <taxon>Tracheophyta</taxon>
        <taxon>Spermatophyta</taxon>
        <taxon>Magnoliopsida</taxon>
        <taxon>eudicotyledons</taxon>
        <taxon>Gunneridae</taxon>
        <taxon>Pentapetalae</taxon>
        <taxon>asterids</taxon>
        <taxon>lamiids</taxon>
        <taxon>Gentianales</taxon>
        <taxon>Rubiaceae</taxon>
        <taxon>Ixoroideae</taxon>
        <taxon>Gardenieae complex</taxon>
        <taxon>Bertiereae - Coffeeae clade</taxon>
        <taxon>Coffeeae</taxon>
        <taxon>Coffea</taxon>
    </lineage>
</organism>
<comment type="function">
    <text>Preferentially cleaves alpha-1,3 and alpha-1,4 glycoside linkages. Involved in the hydrolysis of the galactomannan, it splits alpha-linked galactose moieties. It is particularly suitable for the hydrolysis of guar gum to a gum with improved gelling properties. Can cleave terminal alpha-1,3-linked galactose residues responsible for blood group B specificity from the surface of erythrocytes thereby converting these cells serologically to group O.</text>
</comment>
<comment type="catalytic activity">
    <reaction>
        <text>Hydrolysis of terminal, non-reducing alpha-D-galactose residues in alpha-D-galactosides, including galactose oligosaccharides, galactomannans and galactolipids.</text>
        <dbReference type="EC" id="3.2.1.22"/>
    </reaction>
</comment>
<comment type="biotechnology">
    <text evidence="2 3 5">Used to convert human blood group antigens of type B into type O, the universal donor type.</text>
</comment>
<comment type="similarity">
    <text evidence="6">Belongs to the glycosyl hydrolase 27 family.</text>
</comment>